<comment type="subcellular location">
    <subcellularLocation>
        <location evidence="2">Membrane</location>
        <topology evidence="2">Single-pass type I membrane protein</topology>
    </subcellularLocation>
</comment>
<comment type="similarity">
    <text evidence="2">Belongs to the uroplakin-3 family.</text>
</comment>
<feature type="signal peptide" evidence="1">
    <location>
        <begin position="1"/>
        <end position="33"/>
    </location>
</feature>
<feature type="chain" id="PRO_0000375087" description="Uroplakin-3b-like protein 1">
    <location>
        <begin position="34"/>
        <end position="263"/>
    </location>
</feature>
<feature type="topological domain" description="Extracellular" evidence="1">
    <location>
        <begin position="34"/>
        <end position="204"/>
    </location>
</feature>
<feature type="transmembrane region" description="Helical" evidence="1">
    <location>
        <begin position="205"/>
        <end position="225"/>
    </location>
</feature>
<feature type="topological domain" description="Cytoplasmic" evidence="1">
    <location>
        <begin position="226"/>
        <end position="263"/>
    </location>
</feature>
<feature type="glycosylation site" description="N-linked (GlcNAc...) asparagine" evidence="1">
    <location>
        <position position="51"/>
    </location>
</feature>
<feature type="glycosylation site" description="N-linked (GlcNAc...) asparagine" evidence="1">
    <location>
        <position position="76"/>
    </location>
</feature>
<feature type="glycosylation site" description="N-linked (GlcNAc...) asparagine" evidence="1">
    <location>
        <position position="91"/>
    </location>
</feature>
<reference key="1">
    <citation type="submission" date="2007-12" db="EMBL/GenBank/DDBJ databases">
        <title>Human uroplakin-like protein.</title>
        <authorList>
            <person name="Wistow G."/>
        </authorList>
    </citation>
    <scope>NUCLEOTIDE SEQUENCE [MRNA]</scope>
    <source>
        <tissue>Eye</tissue>
    </source>
</reference>
<reference key="2">
    <citation type="journal article" date="2014" name="BMC Evol. Biol.">
        <title>Generation of divergent uroplakin tetraspanins and their partners during vertebrate evolution: identification of novel uroplakins.</title>
        <authorList>
            <person name="Desalle R."/>
            <person name="Chicote J.U."/>
            <person name="Sun T.T."/>
            <person name="Garcia-Espana A."/>
        </authorList>
    </citation>
    <scope>NUCLEOTIDE SEQUENCE [MRNA]</scope>
</reference>
<reference key="3">
    <citation type="journal article" date="2003" name="Nature">
        <title>The DNA sequence of human chromosome 7.</title>
        <authorList>
            <person name="Hillier L.W."/>
            <person name="Fulton R.S."/>
            <person name="Fulton L.A."/>
            <person name="Graves T.A."/>
            <person name="Pepin K.H."/>
            <person name="Wagner-McPherson C."/>
            <person name="Layman D."/>
            <person name="Maas J."/>
            <person name="Jaeger S."/>
            <person name="Walker R."/>
            <person name="Wylie K."/>
            <person name="Sekhon M."/>
            <person name="Becker M.C."/>
            <person name="O'Laughlin M.D."/>
            <person name="Schaller M.E."/>
            <person name="Fewell G.A."/>
            <person name="Delehaunty K.D."/>
            <person name="Miner T.L."/>
            <person name="Nash W.E."/>
            <person name="Cordes M."/>
            <person name="Du H."/>
            <person name="Sun H."/>
            <person name="Edwards J."/>
            <person name="Bradshaw-Cordum H."/>
            <person name="Ali J."/>
            <person name="Andrews S."/>
            <person name="Isak A."/>
            <person name="Vanbrunt A."/>
            <person name="Nguyen C."/>
            <person name="Du F."/>
            <person name="Lamar B."/>
            <person name="Courtney L."/>
            <person name="Kalicki J."/>
            <person name="Ozersky P."/>
            <person name="Bielicki L."/>
            <person name="Scott K."/>
            <person name="Holmes A."/>
            <person name="Harkins R."/>
            <person name="Harris A."/>
            <person name="Strong C.M."/>
            <person name="Hou S."/>
            <person name="Tomlinson C."/>
            <person name="Dauphin-Kohlberg S."/>
            <person name="Kozlowicz-Reilly A."/>
            <person name="Leonard S."/>
            <person name="Rohlfing T."/>
            <person name="Rock S.M."/>
            <person name="Tin-Wollam A.-M."/>
            <person name="Abbott A."/>
            <person name="Minx P."/>
            <person name="Maupin R."/>
            <person name="Strowmatt C."/>
            <person name="Latreille P."/>
            <person name="Miller N."/>
            <person name="Johnson D."/>
            <person name="Murray J."/>
            <person name="Woessner J.P."/>
            <person name="Wendl M.C."/>
            <person name="Yang S.-P."/>
            <person name="Schultz B.R."/>
            <person name="Wallis J.W."/>
            <person name="Spieth J."/>
            <person name="Bieri T.A."/>
            <person name="Nelson J.O."/>
            <person name="Berkowicz N."/>
            <person name="Wohldmann P.E."/>
            <person name="Cook L.L."/>
            <person name="Hickenbotham M.T."/>
            <person name="Eldred J."/>
            <person name="Williams D."/>
            <person name="Bedell J.A."/>
            <person name="Mardis E.R."/>
            <person name="Clifton S.W."/>
            <person name="Chissoe S.L."/>
            <person name="Marra M.A."/>
            <person name="Raymond C."/>
            <person name="Haugen E."/>
            <person name="Gillett W."/>
            <person name="Zhou Y."/>
            <person name="James R."/>
            <person name="Phelps K."/>
            <person name="Iadanoto S."/>
            <person name="Bubb K."/>
            <person name="Simms E."/>
            <person name="Levy R."/>
            <person name="Clendenning J."/>
            <person name="Kaul R."/>
            <person name="Kent W.J."/>
            <person name="Furey T.S."/>
            <person name="Baertsch R.A."/>
            <person name="Brent M.R."/>
            <person name="Keibler E."/>
            <person name="Flicek P."/>
            <person name="Bork P."/>
            <person name="Suyama M."/>
            <person name="Bailey J.A."/>
            <person name="Portnoy M.E."/>
            <person name="Torrents D."/>
            <person name="Chinwalla A.T."/>
            <person name="Gish W.R."/>
            <person name="Eddy S.R."/>
            <person name="McPherson J.D."/>
            <person name="Olson M.V."/>
            <person name="Eichler E.E."/>
            <person name="Green E.D."/>
            <person name="Waterston R.H."/>
            <person name="Wilson R.K."/>
        </authorList>
    </citation>
    <scope>NUCLEOTIDE SEQUENCE [LARGE SCALE GENOMIC DNA]</scope>
</reference>
<keyword id="KW-0325">Glycoprotein</keyword>
<keyword id="KW-0472">Membrane</keyword>
<keyword id="KW-1185">Reference proteome</keyword>
<keyword id="KW-0732">Signal</keyword>
<keyword id="KW-0812">Transmembrane</keyword>
<keyword id="KW-1133">Transmembrane helix</keyword>
<dbReference type="EMBL" id="EU341824">
    <property type="protein sequence ID" value="ABY56115.1"/>
    <property type="molecule type" value="mRNA"/>
</dbReference>
<dbReference type="EMBL" id="KF150200">
    <property type="protein sequence ID" value="AGV74289.1"/>
    <property type="molecule type" value="mRNA"/>
</dbReference>
<dbReference type="EMBL" id="AC105052">
    <property type="status" value="NOT_ANNOTATED_CDS"/>
    <property type="molecule type" value="Genomic_DNA"/>
</dbReference>
<dbReference type="CCDS" id="CCDS47675.1"/>
<dbReference type="RefSeq" id="NP_001107875.1">
    <property type="nucleotide sequence ID" value="NM_001114403.3"/>
</dbReference>
<dbReference type="RefSeq" id="XP_016868385.1">
    <property type="nucleotide sequence ID" value="XM_017012896.1"/>
</dbReference>
<dbReference type="SMR" id="B0FP48"/>
<dbReference type="BioGRID" id="756078">
    <property type="interactions" value="43"/>
</dbReference>
<dbReference type="FunCoup" id="B0FP48">
    <property type="interactions" value="337"/>
</dbReference>
<dbReference type="IntAct" id="B0FP48">
    <property type="interactions" value="30"/>
</dbReference>
<dbReference type="STRING" id="9606.ENSP00000342938"/>
<dbReference type="TCDB" id="8.A.90.2.3">
    <property type="family name" value="the uroplakin 2/3 (upk2/3) family"/>
</dbReference>
<dbReference type="GlyConnect" id="1888">
    <property type="glycosylation" value="3 N-Linked glycans (2 sites)"/>
</dbReference>
<dbReference type="GlyCosmos" id="B0FP48">
    <property type="glycosylation" value="5 sites, 3 glycans"/>
</dbReference>
<dbReference type="GlyGen" id="B0FP48">
    <property type="glycosylation" value="5 sites, 4 N-linked glycans (2 sites)"/>
</dbReference>
<dbReference type="iPTMnet" id="B0FP48"/>
<dbReference type="PhosphoSitePlus" id="B0FP48"/>
<dbReference type="BioMuta" id="UPK3BL1"/>
<dbReference type="jPOST" id="B0FP48"/>
<dbReference type="MassIVE" id="B0FP48"/>
<dbReference type="PaxDb" id="9606-ENSP00000342938"/>
<dbReference type="PeptideAtlas" id="B0FP48"/>
<dbReference type="ProteomicsDB" id="2542"/>
<dbReference type="Pumba" id="B0FP48"/>
<dbReference type="Antibodypedia" id="74094">
    <property type="antibodies" value="15 antibodies from 7 providers"/>
</dbReference>
<dbReference type="DNASU" id="100134938"/>
<dbReference type="Ensembl" id="ENST00000340457.8">
    <property type="protein sequence ID" value="ENSP00000342938.8"/>
    <property type="gene ID" value="ENSG00000267368.1"/>
</dbReference>
<dbReference type="GeneID" id="100134938"/>
<dbReference type="KEGG" id="hsa:100134938"/>
<dbReference type="MANE-Select" id="ENST00000340457.8">
    <property type="protein sequence ID" value="ENSP00000342938.8"/>
    <property type="RefSeq nucleotide sequence ID" value="NM_001114403.3"/>
    <property type="RefSeq protein sequence ID" value="NP_001107875.1"/>
</dbReference>
<dbReference type="AGR" id="HGNC:37278"/>
<dbReference type="AGR" id="HGNC:53444"/>
<dbReference type="CTD" id="100134938"/>
<dbReference type="GeneCards" id="UPK3BL1"/>
<dbReference type="HGNC" id="HGNC:37278">
    <property type="gene designation" value="UPK3BL1"/>
</dbReference>
<dbReference type="HPA" id="ENSG00000267368">
    <property type="expression patterns" value="Tissue enhanced (esophagus)"/>
</dbReference>
<dbReference type="neXtProt" id="NX_B0FP48"/>
<dbReference type="OpenTargets" id="ENSG00000267368"/>
<dbReference type="PharmGKB" id="PA165618441"/>
<dbReference type="VEuPathDB" id="HostDB:ENSG00000267368"/>
<dbReference type="eggNOG" id="ENOG502S22J">
    <property type="taxonomic scope" value="Eukaryota"/>
</dbReference>
<dbReference type="HOGENOM" id="CLU_082608_0_0_1"/>
<dbReference type="InParanoid" id="B0FP48"/>
<dbReference type="OMA" id="IYTCYDT"/>
<dbReference type="OrthoDB" id="9939598at2759"/>
<dbReference type="PAN-GO" id="B0FP48">
    <property type="GO annotations" value="1 GO annotation based on evolutionary models"/>
</dbReference>
<dbReference type="PhylomeDB" id="B0FP48"/>
<dbReference type="TreeFam" id="TF336628"/>
<dbReference type="PathwayCommons" id="B0FP48"/>
<dbReference type="SignaLink" id="B0FP48"/>
<dbReference type="BioGRID-ORCS" id="100134938">
    <property type="hits" value="122 hits in 1092 CRISPR screens"/>
</dbReference>
<dbReference type="BioGRID-ORCS" id="107983993">
    <property type="hits" value="0 hits in 6 CRISPR screens"/>
</dbReference>
<dbReference type="Pharos" id="B0FP48">
    <property type="development level" value="Tdark"/>
</dbReference>
<dbReference type="PRO" id="PR:B0FP48"/>
<dbReference type="Proteomes" id="UP000005640">
    <property type="component" value="Chromosome 7"/>
</dbReference>
<dbReference type="RNAct" id="B0FP48">
    <property type="molecule type" value="protein"/>
</dbReference>
<dbReference type="Bgee" id="ENSG00000267368">
    <property type="expression patterns" value="Expressed in lower esophagus mucosa and 95 other cell types or tissues"/>
</dbReference>
<dbReference type="GO" id="GO:0016020">
    <property type="term" value="C:membrane"/>
    <property type="evidence" value="ECO:0000318"/>
    <property type="project" value="GO_Central"/>
</dbReference>
<dbReference type="InterPro" id="IPR024831">
    <property type="entry name" value="Uroplakin-3"/>
</dbReference>
<dbReference type="PANTHER" id="PTHR15446">
    <property type="entry name" value="UROPLAKIN III"/>
    <property type="match status" value="1"/>
</dbReference>
<dbReference type="PANTHER" id="PTHR15446:SF2">
    <property type="entry name" value="UROPLAKIN-3B-LIKE PROTEIN 1-RELATED"/>
    <property type="match status" value="1"/>
</dbReference>
<organism>
    <name type="scientific">Homo sapiens</name>
    <name type="common">Human</name>
    <dbReference type="NCBI Taxonomy" id="9606"/>
    <lineage>
        <taxon>Eukaryota</taxon>
        <taxon>Metazoa</taxon>
        <taxon>Chordata</taxon>
        <taxon>Craniata</taxon>
        <taxon>Vertebrata</taxon>
        <taxon>Euteleostomi</taxon>
        <taxon>Mammalia</taxon>
        <taxon>Eutheria</taxon>
        <taxon>Euarchontoglires</taxon>
        <taxon>Primates</taxon>
        <taxon>Haplorrhini</taxon>
        <taxon>Catarrhini</taxon>
        <taxon>Hominidae</taxon>
        <taxon>Homo</taxon>
    </lineage>
</organism>
<accession>B0FP48</accession>
<accession>T2F9S8</accession>
<sequence length="263" mass="28385">MDNSWRLGPAIGLSAGQSQLLVSLLLLLTRVQPGTDVAAPEHISYVPQLSNDTLAGRLTLSTFTLEQPLGQFSSHNISDLDTIWLVVALSNATQSFTAPRTNQDIPAPANFSQRGYYLTLRANRVLYQTRGQLHVLRVGNDTHCQPTKIGCNHPLPGPGPYRVKFLVMNDEGPVAETKWSSDTRLQQAQALRAVPGPQSPGTVVIIAILSILLAVLLTVLLAVLIYTCFNSCRSTSLSGPEEAGSVRRYTTHLAFSTPAEGAS</sequence>
<protein>
    <recommendedName>
        <fullName evidence="3">Uroplakin-3b-like protein 1</fullName>
    </recommendedName>
</protein>
<gene>
    <name evidence="3" type="primary">UPK3BL1</name>
    <name type="synonym">UPLP</name>
</gene>
<proteinExistence type="evidence at transcript level"/>
<name>UPK3L_HUMAN</name>
<evidence type="ECO:0000255" key="1"/>
<evidence type="ECO:0000305" key="2"/>
<evidence type="ECO:0000312" key="3">
    <source>
        <dbReference type="HGNC" id="HGNC:37278"/>
    </source>
</evidence>